<protein>
    <recommendedName>
        <fullName evidence="1">Ribosomal RNA small subunit methyltransferase A</fullName>
        <ecNumber evidence="1">2.1.1.182</ecNumber>
    </recommendedName>
    <alternativeName>
        <fullName evidence="1">16S rRNA (adenine(1518)-N(6)/adenine(1519)-N(6))-dimethyltransferase</fullName>
    </alternativeName>
    <alternativeName>
        <fullName evidence="1">16S rRNA dimethyladenosine transferase</fullName>
    </alternativeName>
    <alternativeName>
        <fullName evidence="1">16S rRNA dimethylase</fullName>
    </alternativeName>
    <alternativeName>
        <fullName evidence="1">S-adenosylmethionine-6-N', N'-adenosyl(rRNA) dimethyltransferase</fullName>
    </alternativeName>
</protein>
<comment type="function">
    <text evidence="1">Specifically dimethylates two adjacent adenosines (A1518 and A1519) in the loop of a conserved hairpin near the 3'-end of 16S rRNA in the 30S particle. May play a critical role in biogenesis of 30S subunits.</text>
</comment>
<comment type="catalytic activity">
    <reaction evidence="1">
        <text>adenosine(1518)/adenosine(1519) in 16S rRNA + 4 S-adenosyl-L-methionine = N(6)-dimethyladenosine(1518)/N(6)-dimethyladenosine(1519) in 16S rRNA + 4 S-adenosyl-L-homocysteine + 4 H(+)</text>
        <dbReference type="Rhea" id="RHEA:19609"/>
        <dbReference type="Rhea" id="RHEA-COMP:10232"/>
        <dbReference type="Rhea" id="RHEA-COMP:10233"/>
        <dbReference type="ChEBI" id="CHEBI:15378"/>
        <dbReference type="ChEBI" id="CHEBI:57856"/>
        <dbReference type="ChEBI" id="CHEBI:59789"/>
        <dbReference type="ChEBI" id="CHEBI:74411"/>
        <dbReference type="ChEBI" id="CHEBI:74493"/>
        <dbReference type="EC" id="2.1.1.182"/>
    </reaction>
</comment>
<comment type="subcellular location">
    <subcellularLocation>
        <location evidence="1">Cytoplasm</location>
    </subcellularLocation>
</comment>
<comment type="similarity">
    <text evidence="1">Belongs to the class I-like SAM-binding methyltransferase superfamily. rRNA adenine N(6)-methyltransferase family. RsmA subfamily.</text>
</comment>
<feature type="chain" id="PRO_0000101614" description="Ribosomal RNA small subunit methyltransferase A">
    <location>
        <begin position="1"/>
        <end position="286"/>
    </location>
</feature>
<feature type="binding site" evidence="1">
    <location>
        <position position="33"/>
    </location>
    <ligand>
        <name>S-adenosyl-L-methionine</name>
        <dbReference type="ChEBI" id="CHEBI:59789"/>
    </ligand>
</feature>
<feature type="binding site" evidence="1">
    <location>
        <position position="35"/>
    </location>
    <ligand>
        <name>S-adenosyl-L-methionine</name>
        <dbReference type="ChEBI" id="CHEBI:59789"/>
    </ligand>
</feature>
<feature type="binding site" evidence="1">
    <location>
        <position position="60"/>
    </location>
    <ligand>
        <name>S-adenosyl-L-methionine</name>
        <dbReference type="ChEBI" id="CHEBI:59789"/>
    </ligand>
</feature>
<feature type="binding site" evidence="1">
    <location>
        <position position="81"/>
    </location>
    <ligand>
        <name>S-adenosyl-L-methionine</name>
        <dbReference type="ChEBI" id="CHEBI:59789"/>
    </ligand>
</feature>
<feature type="binding site" evidence="1">
    <location>
        <position position="111"/>
    </location>
    <ligand>
        <name>S-adenosyl-L-methionine</name>
        <dbReference type="ChEBI" id="CHEBI:59789"/>
    </ligand>
</feature>
<feature type="binding site" evidence="1">
    <location>
        <position position="129"/>
    </location>
    <ligand>
        <name>S-adenosyl-L-methionine</name>
        <dbReference type="ChEBI" id="CHEBI:59789"/>
    </ligand>
</feature>
<dbReference type="EC" id="2.1.1.182" evidence="1"/>
<dbReference type="EMBL" id="AL939115">
    <property type="protein sequence ID" value="CAB95942.1"/>
    <property type="molecule type" value="Genomic_DNA"/>
</dbReference>
<dbReference type="RefSeq" id="NP_627366.1">
    <property type="nucleotide sequence ID" value="NC_003888.3"/>
</dbReference>
<dbReference type="RefSeq" id="WP_003975667.1">
    <property type="nucleotide sequence ID" value="NZ_VNID01000013.1"/>
</dbReference>
<dbReference type="SMR" id="Q9K3R5"/>
<dbReference type="FunCoup" id="Q9K3R5">
    <property type="interactions" value="298"/>
</dbReference>
<dbReference type="STRING" id="100226.gene:17760766"/>
<dbReference type="PaxDb" id="100226-SCO3149"/>
<dbReference type="GeneID" id="96649999"/>
<dbReference type="KEGG" id="sco:SCO3149"/>
<dbReference type="PATRIC" id="fig|100226.15.peg.3210"/>
<dbReference type="eggNOG" id="COG0030">
    <property type="taxonomic scope" value="Bacteria"/>
</dbReference>
<dbReference type="HOGENOM" id="CLU_041220_1_1_11"/>
<dbReference type="InParanoid" id="Q9K3R5"/>
<dbReference type="OrthoDB" id="9814755at2"/>
<dbReference type="PhylomeDB" id="Q9K3R5"/>
<dbReference type="Proteomes" id="UP000001973">
    <property type="component" value="Chromosome"/>
</dbReference>
<dbReference type="GO" id="GO:0005829">
    <property type="term" value="C:cytosol"/>
    <property type="evidence" value="ECO:0000318"/>
    <property type="project" value="GO_Central"/>
</dbReference>
<dbReference type="GO" id="GO:0052908">
    <property type="term" value="F:16S rRNA (adenine(1518)-N(6)/adenine(1519)-N(6))-dimethyltransferase activity"/>
    <property type="evidence" value="ECO:0007669"/>
    <property type="project" value="UniProtKB-EC"/>
</dbReference>
<dbReference type="GO" id="GO:0003723">
    <property type="term" value="F:RNA binding"/>
    <property type="evidence" value="ECO:0007669"/>
    <property type="project" value="UniProtKB-KW"/>
</dbReference>
<dbReference type="GO" id="GO:0000179">
    <property type="term" value="F:rRNA (adenine-N6,N6-)-dimethyltransferase activity"/>
    <property type="evidence" value="ECO:0000318"/>
    <property type="project" value="GO_Central"/>
</dbReference>
<dbReference type="GO" id="GO:0031167">
    <property type="term" value="P:rRNA methylation"/>
    <property type="evidence" value="ECO:0000318"/>
    <property type="project" value="GO_Central"/>
</dbReference>
<dbReference type="CDD" id="cd02440">
    <property type="entry name" value="AdoMet_MTases"/>
    <property type="match status" value="1"/>
</dbReference>
<dbReference type="FunFam" id="1.10.8.100:FF:000003">
    <property type="entry name" value="Ribosomal RNA small subunit methyltransferase A"/>
    <property type="match status" value="1"/>
</dbReference>
<dbReference type="FunFam" id="3.40.50.150:FF:000023">
    <property type="entry name" value="Ribosomal RNA small subunit methyltransferase A"/>
    <property type="match status" value="1"/>
</dbReference>
<dbReference type="Gene3D" id="1.10.8.100">
    <property type="entry name" value="Ribosomal RNA adenine dimethylase-like, domain 2"/>
    <property type="match status" value="1"/>
</dbReference>
<dbReference type="Gene3D" id="3.40.50.150">
    <property type="entry name" value="Vaccinia Virus protein VP39"/>
    <property type="match status" value="1"/>
</dbReference>
<dbReference type="HAMAP" id="MF_00607">
    <property type="entry name" value="16SrRNA_methyltr_A"/>
    <property type="match status" value="1"/>
</dbReference>
<dbReference type="InterPro" id="IPR001737">
    <property type="entry name" value="KsgA/Erm"/>
</dbReference>
<dbReference type="InterPro" id="IPR023165">
    <property type="entry name" value="rRNA_Ade_diMease-like_C"/>
</dbReference>
<dbReference type="InterPro" id="IPR020596">
    <property type="entry name" value="rRNA_Ade_Mease_Trfase_CS"/>
</dbReference>
<dbReference type="InterPro" id="IPR020598">
    <property type="entry name" value="rRNA_Ade_methylase_Trfase_N"/>
</dbReference>
<dbReference type="InterPro" id="IPR011530">
    <property type="entry name" value="rRNA_adenine_dimethylase"/>
</dbReference>
<dbReference type="InterPro" id="IPR029063">
    <property type="entry name" value="SAM-dependent_MTases_sf"/>
</dbReference>
<dbReference type="NCBIfam" id="TIGR00755">
    <property type="entry name" value="ksgA"/>
    <property type="match status" value="1"/>
</dbReference>
<dbReference type="PANTHER" id="PTHR11727">
    <property type="entry name" value="DIMETHYLADENOSINE TRANSFERASE"/>
    <property type="match status" value="1"/>
</dbReference>
<dbReference type="PANTHER" id="PTHR11727:SF7">
    <property type="entry name" value="DIMETHYLADENOSINE TRANSFERASE-RELATED"/>
    <property type="match status" value="1"/>
</dbReference>
<dbReference type="Pfam" id="PF00398">
    <property type="entry name" value="RrnaAD"/>
    <property type="match status" value="1"/>
</dbReference>
<dbReference type="SMART" id="SM00650">
    <property type="entry name" value="rADc"/>
    <property type="match status" value="1"/>
</dbReference>
<dbReference type="SUPFAM" id="SSF53335">
    <property type="entry name" value="S-adenosyl-L-methionine-dependent methyltransferases"/>
    <property type="match status" value="1"/>
</dbReference>
<dbReference type="PROSITE" id="PS01131">
    <property type="entry name" value="RRNA_A_DIMETH"/>
    <property type="match status" value="1"/>
</dbReference>
<dbReference type="PROSITE" id="PS51689">
    <property type="entry name" value="SAM_RNA_A_N6_MT"/>
    <property type="match status" value="1"/>
</dbReference>
<evidence type="ECO:0000255" key="1">
    <source>
        <dbReference type="HAMAP-Rule" id="MF_00607"/>
    </source>
</evidence>
<proteinExistence type="inferred from homology"/>
<reference key="1">
    <citation type="journal article" date="2002" name="Nature">
        <title>Complete genome sequence of the model actinomycete Streptomyces coelicolor A3(2).</title>
        <authorList>
            <person name="Bentley S.D."/>
            <person name="Chater K.F."/>
            <person name="Cerdeno-Tarraga A.-M."/>
            <person name="Challis G.L."/>
            <person name="Thomson N.R."/>
            <person name="James K.D."/>
            <person name="Harris D.E."/>
            <person name="Quail M.A."/>
            <person name="Kieser H."/>
            <person name="Harper D."/>
            <person name="Bateman A."/>
            <person name="Brown S."/>
            <person name="Chandra G."/>
            <person name="Chen C.W."/>
            <person name="Collins M."/>
            <person name="Cronin A."/>
            <person name="Fraser A."/>
            <person name="Goble A."/>
            <person name="Hidalgo J."/>
            <person name="Hornsby T."/>
            <person name="Howarth S."/>
            <person name="Huang C.-H."/>
            <person name="Kieser T."/>
            <person name="Larke L."/>
            <person name="Murphy L.D."/>
            <person name="Oliver K."/>
            <person name="O'Neil S."/>
            <person name="Rabbinowitsch E."/>
            <person name="Rajandream M.A."/>
            <person name="Rutherford K.M."/>
            <person name="Rutter S."/>
            <person name="Seeger K."/>
            <person name="Saunders D."/>
            <person name="Sharp S."/>
            <person name="Squares R."/>
            <person name="Squares S."/>
            <person name="Taylor K."/>
            <person name="Warren T."/>
            <person name="Wietzorrek A."/>
            <person name="Woodward J.R."/>
            <person name="Barrell B.G."/>
            <person name="Parkhill J."/>
            <person name="Hopwood D.A."/>
        </authorList>
    </citation>
    <scope>NUCLEOTIDE SEQUENCE [LARGE SCALE GENOMIC DNA]</scope>
    <source>
        <strain>ATCC BAA-471 / A3(2) / M145</strain>
    </source>
</reference>
<gene>
    <name evidence="1" type="primary">rsmA</name>
    <name evidence="1" type="synonym">ksgA</name>
    <name type="ordered locus">SCO3149</name>
    <name type="ORF">SCE66.28c</name>
</gene>
<organism>
    <name type="scientific">Streptomyces coelicolor (strain ATCC BAA-471 / A3(2) / M145)</name>
    <dbReference type="NCBI Taxonomy" id="100226"/>
    <lineage>
        <taxon>Bacteria</taxon>
        <taxon>Bacillati</taxon>
        <taxon>Actinomycetota</taxon>
        <taxon>Actinomycetes</taxon>
        <taxon>Kitasatosporales</taxon>
        <taxon>Streptomycetaceae</taxon>
        <taxon>Streptomyces</taxon>
        <taxon>Streptomyces albidoflavus group</taxon>
    </lineage>
</organism>
<sequence length="286" mass="29962">MSSPTPDALLGPADVRELAAALGVRPTKQRGQNFVIDANTVRRIVRTAEVRPDDVVVEVGPGLGSLTLALLEAADRVTAVEIDDVLAGALPATVAARMPARADRFALVHSDAMHVRELPGPAPTALVANLPYNVAVPVLLHMLDTFPGIERTLVMVQAEVADRLAAGPGSKVYGVPSVKANWYAEVKRAGSIGRNVFWPAPNVDSGLVSLVRRSEPLRTTASKAEVFAVVDAAFAQRRKTLRAALAGWAGSAAAAEAALVGAGVSPQARGEALTVEEFARIAEHKV</sequence>
<accession>Q9K3R5</accession>
<name>RSMA_STRCO</name>
<keyword id="KW-0963">Cytoplasm</keyword>
<keyword id="KW-0489">Methyltransferase</keyword>
<keyword id="KW-1185">Reference proteome</keyword>
<keyword id="KW-0694">RNA-binding</keyword>
<keyword id="KW-0698">rRNA processing</keyword>
<keyword id="KW-0949">S-adenosyl-L-methionine</keyword>
<keyword id="KW-0808">Transferase</keyword>